<accession>Q8W4I5</accession>
<reference key="1">
    <citation type="journal article" date="2000" name="Nature">
        <title>Sequence and analysis of chromosome 1 of the plant Arabidopsis thaliana.</title>
        <authorList>
            <person name="Theologis A."/>
            <person name="Ecker J.R."/>
            <person name="Palm C.J."/>
            <person name="Federspiel N.A."/>
            <person name="Kaul S."/>
            <person name="White O."/>
            <person name="Alonso J."/>
            <person name="Altafi H."/>
            <person name="Araujo R."/>
            <person name="Bowman C.L."/>
            <person name="Brooks S.Y."/>
            <person name="Buehler E."/>
            <person name="Chan A."/>
            <person name="Chao Q."/>
            <person name="Chen H."/>
            <person name="Cheuk R.F."/>
            <person name="Chin C.W."/>
            <person name="Chung M.K."/>
            <person name="Conn L."/>
            <person name="Conway A.B."/>
            <person name="Conway A.R."/>
            <person name="Creasy T.H."/>
            <person name="Dewar K."/>
            <person name="Dunn P."/>
            <person name="Etgu P."/>
            <person name="Feldblyum T.V."/>
            <person name="Feng J.-D."/>
            <person name="Fong B."/>
            <person name="Fujii C.Y."/>
            <person name="Gill J.E."/>
            <person name="Goldsmith A.D."/>
            <person name="Haas B."/>
            <person name="Hansen N.F."/>
            <person name="Hughes B."/>
            <person name="Huizar L."/>
            <person name="Hunter J.L."/>
            <person name="Jenkins J."/>
            <person name="Johnson-Hopson C."/>
            <person name="Khan S."/>
            <person name="Khaykin E."/>
            <person name="Kim C.J."/>
            <person name="Koo H.L."/>
            <person name="Kremenetskaia I."/>
            <person name="Kurtz D.B."/>
            <person name="Kwan A."/>
            <person name="Lam B."/>
            <person name="Langin-Hooper S."/>
            <person name="Lee A."/>
            <person name="Lee J.M."/>
            <person name="Lenz C.A."/>
            <person name="Li J.H."/>
            <person name="Li Y.-P."/>
            <person name="Lin X."/>
            <person name="Liu S.X."/>
            <person name="Liu Z.A."/>
            <person name="Luros J.S."/>
            <person name="Maiti R."/>
            <person name="Marziali A."/>
            <person name="Militscher J."/>
            <person name="Miranda M."/>
            <person name="Nguyen M."/>
            <person name="Nierman W.C."/>
            <person name="Osborne B.I."/>
            <person name="Pai G."/>
            <person name="Peterson J."/>
            <person name="Pham P.K."/>
            <person name="Rizzo M."/>
            <person name="Rooney T."/>
            <person name="Rowley D."/>
            <person name="Sakano H."/>
            <person name="Salzberg S.L."/>
            <person name="Schwartz J.R."/>
            <person name="Shinn P."/>
            <person name="Southwick A.M."/>
            <person name="Sun H."/>
            <person name="Tallon L.J."/>
            <person name="Tambunga G."/>
            <person name="Toriumi M.J."/>
            <person name="Town C.D."/>
            <person name="Utterback T."/>
            <person name="Van Aken S."/>
            <person name="Vaysberg M."/>
            <person name="Vysotskaia V.S."/>
            <person name="Walker M."/>
            <person name="Wu D."/>
            <person name="Yu G."/>
            <person name="Fraser C.M."/>
            <person name="Venter J.C."/>
            <person name="Davis R.W."/>
        </authorList>
    </citation>
    <scope>NUCLEOTIDE SEQUENCE [LARGE SCALE GENOMIC DNA]</scope>
    <source>
        <strain>cv. Columbia</strain>
    </source>
</reference>
<reference key="2">
    <citation type="journal article" date="2017" name="Plant J.">
        <title>Araport11: a complete reannotation of the Arabidopsis thaliana reference genome.</title>
        <authorList>
            <person name="Cheng C.Y."/>
            <person name="Krishnakumar V."/>
            <person name="Chan A.P."/>
            <person name="Thibaud-Nissen F."/>
            <person name="Schobel S."/>
            <person name="Town C.D."/>
        </authorList>
    </citation>
    <scope>GENOME REANNOTATION</scope>
    <source>
        <strain>cv. Columbia</strain>
    </source>
</reference>
<reference key="3">
    <citation type="journal article" date="2003" name="Science">
        <title>Empirical analysis of transcriptional activity in the Arabidopsis genome.</title>
        <authorList>
            <person name="Yamada K."/>
            <person name="Lim J."/>
            <person name="Dale J.M."/>
            <person name="Chen H."/>
            <person name="Shinn P."/>
            <person name="Palm C.J."/>
            <person name="Southwick A.M."/>
            <person name="Wu H.C."/>
            <person name="Kim C.J."/>
            <person name="Nguyen M."/>
            <person name="Pham P.K."/>
            <person name="Cheuk R.F."/>
            <person name="Karlin-Newmann G."/>
            <person name="Liu S.X."/>
            <person name="Lam B."/>
            <person name="Sakano H."/>
            <person name="Wu T."/>
            <person name="Yu G."/>
            <person name="Miranda M."/>
            <person name="Quach H.L."/>
            <person name="Tripp M."/>
            <person name="Chang C.H."/>
            <person name="Lee J.M."/>
            <person name="Toriumi M.J."/>
            <person name="Chan M.M."/>
            <person name="Tang C.C."/>
            <person name="Onodera C.S."/>
            <person name="Deng J.M."/>
            <person name="Akiyama K."/>
            <person name="Ansari Y."/>
            <person name="Arakawa T."/>
            <person name="Banh J."/>
            <person name="Banno F."/>
            <person name="Bowser L."/>
            <person name="Brooks S.Y."/>
            <person name="Carninci P."/>
            <person name="Chao Q."/>
            <person name="Choy N."/>
            <person name="Enju A."/>
            <person name="Goldsmith A.D."/>
            <person name="Gurjal M."/>
            <person name="Hansen N.F."/>
            <person name="Hayashizaki Y."/>
            <person name="Johnson-Hopson C."/>
            <person name="Hsuan V.W."/>
            <person name="Iida K."/>
            <person name="Karnes M."/>
            <person name="Khan S."/>
            <person name="Koesema E."/>
            <person name="Ishida J."/>
            <person name="Jiang P.X."/>
            <person name="Jones T."/>
            <person name="Kawai J."/>
            <person name="Kamiya A."/>
            <person name="Meyers C."/>
            <person name="Nakajima M."/>
            <person name="Narusaka M."/>
            <person name="Seki M."/>
            <person name="Sakurai T."/>
            <person name="Satou M."/>
            <person name="Tamse R."/>
            <person name="Vaysberg M."/>
            <person name="Wallender E.K."/>
            <person name="Wong C."/>
            <person name="Yamamura Y."/>
            <person name="Yuan S."/>
            <person name="Shinozaki K."/>
            <person name="Davis R.W."/>
            <person name="Theologis A."/>
            <person name="Ecker J.R."/>
        </authorList>
    </citation>
    <scope>NUCLEOTIDE SEQUENCE [LARGE SCALE MRNA]</scope>
    <source>
        <strain>cv. Columbia</strain>
    </source>
</reference>
<reference key="4">
    <citation type="submission" date="2002-03" db="EMBL/GenBank/DDBJ databases">
        <title>Full-length cDNA from Arabidopsis thaliana.</title>
        <authorList>
            <person name="Brover V.V."/>
            <person name="Troukhan M.E."/>
            <person name="Alexandrov N.A."/>
            <person name="Lu Y.-P."/>
            <person name="Flavell R.B."/>
            <person name="Feldmann K.A."/>
        </authorList>
    </citation>
    <scope>NUCLEOTIDE SEQUENCE [LARGE SCALE MRNA]</scope>
</reference>
<reference key="5">
    <citation type="journal article" date="2006" name="Plant Physiol.">
        <title>Genome-wide analysis of the ERF gene family in Arabidopsis and rice.</title>
        <authorList>
            <person name="Nakano T."/>
            <person name="Suzuki K."/>
            <person name="Fujimura T."/>
            <person name="Shinshi H."/>
        </authorList>
    </citation>
    <scope>GENE FAMILY</scope>
    <scope>NOMENCLATURE</scope>
</reference>
<evidence type="ECO:0000250" key="1"/>
<evidence type="ECO:0000255" key="2">
    <source>
        <dbReference type="PROSITE-ProRule" id="PRU00366"/>
    </source>
</evidence>
<evidence type="ECO:0000256" key="3">
    <source>
        <dbReference type="SAM" id="MobiDB-lite"/>
    </source>
</evidence>
<evidence type="ECO:0000305" key="4"/>
<organism>
    <name type="scientific">Arabidopsis thaliana</name>
    <name type="common">Mouse-ear cress</name>
    <dbReference type="NCBI Taxonomy" id="3702"/>
    <lineage>
        <taxon>Eukaryota</taxon>
        <taxon>Viridiplantae</taxon>
        <taxon>Streptophyta</taxon>
        <taxon>Embryophyta</taxon>
        <taxon>Tracheophyta</taxon>
        <taxon>Spermatophyta</taxon>
        <taxon>Magnoliopsida</taxon>
        <taxon>eudicotyledons</taxon>
        <taxon>Gunneridae</taxon>
        <taxon>Pentapetalae</taxon>
        <taxon>rosids</taxon>
        <taxon>malvids</taxon>
        <taxon>Brassicales</taxon>
        <taxon>Brassicaceae</taxon>
        <taxon>Camelineae</taxon>
        <taxon>Arabidopsis</taxon>
    </lineage>
</organism>
<feature type="chain" id="PRO_0000290404" description="Ethylene-responsive transcription factor ERF069">
    <location>
        <begin position="1"/>
        <end position="159"/>
    </location>
</feature>
<feature type="DNA-binding region" description="AP2/ERF" evidence="2">
    <location>
        <begin position="74"/>
        <end position="134"/>
    </location>
</feature>
<feature type="region of interest" description="Disordered" evidence="3">
    <location>
        <begin position="1"/>
        <end position="36"/>
    </location>
</feature>
<feature type="region of interest" description="Disordered" evidence="3">
    <location>
        <begin position="128"/>
        <end position="159"/>
    </location>
</feature>
<feature type="compositionally biased region" description="Basic and acidic residues" evidence="3">
    <location>
        <begin position="136"/>
        <end position="148"/>
    </location>
</feature>
<comment type="function">
    <text evidence="1">Probably acts as a transcriptional activator. Binds to the GCC-box pathogenesis-related promoter element. May be involved in the regulation of gene expression by stress factors and by components of stress signal transduction pathways (By similarity).</text>
</comment>
<comment type="interaction">
    <interactant intactId="EBI-5568301">
        <id>Q8W4I5</id>
    </interactant>
    <interactant intactId="EBI-5567273">
        <id>Q9SUQ2</id>
        <label>CRF2</label>
    </interactant>
    <organismsDiffer>false</organismsDiffer>
    <experiments>3</experiments>
</comment>
<comment type="interaction">
    <interactant intactId="EBI-5568301">
        <id>Q8W4I5</id>
    </interactant>
    <interactant intactId="EBI-5567993">
        <id>Q9FK12</id>
        <label>CRF3</label>
    </interactant>
    <organismsDiffer>false</organismsDiffer>
    <experiments>3</experiments>
</comment>
<comment type="interaction">
    <interactant intactId="EBI-5568301">
        <id>Q8W4I5</id>
    </interactant>
    <interactant intactId="EBI-5567027">
        <id>Q9SUE3</id>
        <label>CRF4</label>
    </interactant>
    <organismsDiffer>false</organismsDiffer>
    <experiments>3</experiments>
</comment>
<comment type="interaction">
    <interactant intactId="EBI-5568301">
        <id>Q8W4I5</id>
    </interactant>
    <interactant intactId="EBI-5567180">
        <id>O82339</id>
        <label>CRF5</label>
    </interactant>
    <organismsDiffer>false</organismsDiffer>
    <experiments>3</experiments>
</comment>
<comment type="interaction">
    <interactant intactId="EBI-5568301">
        <id>Q8W4I5</id>
    </interactant>
    <interactant intactId="EBI-5568101">
        <id>Q9M374</id>
        <label>CRF6</label>
    </interactant>
    <organismsDiffer>false</organismsDiffer>
    <experiments>3</experiments>
</comment>
<comment type="interaction">
    <interactant intactId="EBI-5568301">
        <id>Q8W4I5</id>
    </interactant>
    <interactant intactId="EBI-5568333">
        <id>Q9C995</id>
        <label>ERF070</label>
    </interactant>
    <organismsDiffer>false</organismsDiffer>
    <experiments>3</experiments>
</comment>
<comment type="interaction">
    <interactant intactId="EBI-5568301">
        <id>Q8W4I5</id>
    </interactant>
    <interactant intactId="EBI-15192147">
        <id>Q9M2V2</id>
        <label>T12E18_40</label>
    </interactant>
    <organismsDiffer>false</organismsDiffer>
    <experiments>6</experiments>
</comment>
<comment type="subcellular location">
    <subcellularLocation>
        <location evidence="4">Nucleus</location>
    </subcellularLocation>
</comment>
<comment type="similarity">
    <text evidence="4">Belongs to the AP2/ERF transcription factor family. ERF subfamily.</text>
</comment>
<sequence length="159" mass="17536">MKRIVRISFTDMEATDSSSSEDESPPSSRRRGKKLVKEIVIDHSDPPEVGKTRFKIRIPASLLAARNTTANKKKFRGVRQRPWGKWAAEIRCGRVKGRPERIWLGTFETAEEAALAYDNAAIQLIGPDAPTNFGRPDVDSAVVKKQDSDASGGASEEVV</sequence>
<dbReference type="EMBL" id="AF000657">
    <property type="status" value="NOT_ANNOTATED_CDS"/>
    <property type="molecule type" value="Genomic_DNA"/>
</dbReference>
<dbReference type="EMBL" id="CP002684">
    <property type="protein sequence ID" value="AEE30318.1"/>
    <property type="molecule type" value="Genomic_DNA"/>
</dbReference>
<dbReference type="EMBL" id="AY062541">
    <property type="protein sequence ID" value="AAL32619.1"/>
    <property type="molecule type" value="mRNA"/>
</dbReference>
<dbReference type="EMBL" id="AY093336">
    <property type="protein sequence ID" value="AAM13335.1"/>
    <property type="molecule type" value="mRNA"/>
</dbReference>
<dbReference type="EMBL" id="AY087064">
    <property type="protein sequence ID" value="AAM64625.1"/>
    <property type="molecule type" value="mRNA"/>
</dbReference>
<dbReference type="SMR" id="Q8W4I5"/>
<dbReference type="BioGRID" id="24145">
    <property type="interactions" value="17"/>
</dbReference>
<dbReference type="FunCoup" id="Q8W4I5">
    <property type="interactions" value="8"/>
</dbReference>
<dbReference type="IntAct" id="Q8W4I5">
    <property type="interactions" value="16"/>
</dbReference>
<dbReference type="STRING" id="3702.Q8W4I5"/>
<dbReference type="PaxDb" id="3702-AT1G22985.1"/>
<dbReference type="ProteomicsDB" id="220626"/>
<dbReference type="EnsemblPlants" id="AT1G22985.1">
    <property type="protein sequence ID" value="AT1G22985.1"/>
    <property type="gene ID" value="AT1G22985"/>
</dbReference>
<dbReference type="Gramene" id="AT1G22985.1">
    <property type="protein sequence ID" value="AT1G22985.1"/>
    <property type="gene ID" value="AT1G22985"/>
</dbReference>
<dbReference type="KEGG" id="ath:AT1G22985"/>
<dbReference type="Araport" id="AT1G22985"/>
<dbReference type="TAIR" id="AT1G22985">
    <property type="gene designation" value="CRF7"/>
</dbReference>
<dbReference type="eggNOG" id="ENOG502R7AV">
    <property type="taxonomic scope" value="Eukaryota"/>
</dbReference>
<dbReference type="HOGENOM" id="CLU_062946_3_0_1"/>
<dbReference type="InParanoid" id="Q8W4I5"/>
<dbReference type="OMA" id="IMDNDAT"/>
<dbReference type="PhylomeDB" id="Q8W4I5"/>
<dbReference type="PRO" id="PR:Q8W4I5"/>
<dbReference type="Proteomes" id="UP000006548">
    <property type="component" value="Chromosome 1"/>
</dbReference>
<dbReference type="ExpressionAtlas" id="Q8W4I5">
    <property type="expression patterns" value="baseline and differential"/>
</dbReference>
<dbReference type="GO" id="GO:0005634">
    <property type="term" value="C:nucleus"/>
    <property type="evidence" value="ECO:0000314"/>
    <property type="project" value="TAIR"/>
</dbReference>
<dbReference type="GO" id="GO:0003700">
    <property type="term" value="F:DNA-binding transcription factor activity"/>
    <property type="evidence" value="ECO:0000250"/>
    <property type="project" value="TAIR"/>
</dbReference>
<dbReference type="GO" id="GO:0000976">
    <property type="term" value="F:transcription cis-regulatory region binding"/>
    <property type="evidence" value="ECO:0000353"/>
    <property type="project" value="TAIR"/>
</dbReference>
<dbReference type="GO" id="GO:0009873">
    <property type="term" value="P:ethylene-activated signaling pathway"/>
    <property type="evidence" value="ECO:0007669"/>
    <property type="project" value="UniProtKB-KW"/>
</dbReference>
<dbReference type="CDD" id="cd00018">
    <property type="entry name" value="AP2"/>
    <property type="match status" value="1"/>
</dbReference>
<dbReference type="FunFam" id="3.30.730.10:FF:000001">
    <property type="entry name" value="Ethylene-responsive transcription factor 2"/>
    <property type="match status" value="1"/>
</dbReference>
<dbReference type="Gene3D" id="3.30.730.10">
    <property type="entry name" value="AP2/ERF domain"/>
    <property type="match status" value="1"/>
</dbReference>
<dbReference type="InterPro" id="IPR017392">
    <property type="entry name" value="AP2/ERF-transcript_factor"/>
</dbReference>
<dbReference type="InterPro" id="IPR001471">
    <property type="entry name" value="AP2/ERF_dom"/>
</dbReference>
<dbReference type="InterPro" id="IPR036955">
    <property type="entry name" value="AP2/ERF_dom_sf"/>
</dbReference>
<dbReference type="InterPro" id="IPR050913">
    <property type="entry name" value="AP2/ERF_ERF_subfamily"/>
</dbReference>
<dbReference type="InterPro" id="IPR016177">
    <property type="entry name" value="DNA-bd_dom_sf"/>
</dbReference>
<dbReference type="PANTHER" id="PTHR31194:SF142">
    <property type="entry name" value="ETHYLENE-RESPONSIVE TRANSCRIPTION FACTOR ERF069"/>
    <property type="match status" value="1"/>
</dbReference>
<dbReference type="PANTHER" id="PTHR31194">
    <property type="entry name" value="SHN SHINE , DNA BINDING / TRANSCRIPTION FACTOR"/>
    <property type="match status" value="1"/>
</dbReference>
<dbReference type="Pfam" id="PF00847">
    <property type="entry name" value="AP2"/>
    <property type="match status" value="1"/>
</dbReference>
<dbReference type="PIRSF" id="PIRSF038123">
    <property type="entry name" value="PTI6"/>
    <property type="match status" value="1"/>
</dbReference>
<dbReference type="PRINTS" id="PR00367">
    <property type="entry name" value="ETHRSPELEMNT"/>
</dbReference>
<dbReference type="SMART" id="SM00380">
    <property type="entry name" value="AP2"/>
    <property type="match status" value="1"/>
</dbReference>
<dbReference type="SUPFAM" id="SSF54171">
    <property type="entry name" value="DNA-binding domain"/>
    <property type="match status" value="1"/>
</dbReference>
<dbReference type="PROSITE" id="PS51032">
    <property type="entry name" value="AP2_ERF"/>
    <property type="match status" value="1"/>
</dbReference>
<keyword id="KW-0010">Activator</keyword>
<keyword id="KW-0238">DNA-binding</keyword>
<keyword id="KW-0936">Ethylene signaling pathway</keyword>
<keyword id="KW-0539">Nucleus</keyword>
<keyword id="KW-1185">Reference proteome</keyword>
<keyword id="KW-0804">Transcription</keyword>
<keyword id="KW-0805">Transcription regulation</keyword>
<gene>
    <name type="primary">ERF069</name>
    <name type="ordered locus">At1g22985</name>
    <name type="ORF">F19G10.2</name>
</gene>
<proteinExistence type="evidence at protein level"/>
<name>ERF69_ARATH</name>
<protein>
    <recommendedName>
        <fullName>Ethylene-responsive transcription factor ERF069</fullName>
    </recommendedName>
</protein>